<organism>
    <name type="scientific">Xanthomonas oryzae pv. oryzae (strain MAFF 311018)</name>
    <dbReference type="NCBI Taxonomy" id="342109"/>
    <lineage>
        <taxon>Bacteria</taxon>
        <taxon>Pseudomonadati</taxon>
        <taxon>Pseudomonadota</taxon>
        <taxon>Gammaproteobacteria</taxon>
        <taxon>Lysobacterales</taxon>
        <taxon>Lysobacteraceae</taxon>
        <taxon>Xanthomonas</taxon>
    </lineage>
</organism>
<dbReference type="EC" id="2.4.1.21" evidence="1"/>
<dbReference type="EMBL" id="AP008229">
    <property type="protein sequence ID" value="BAE66821.1"/>
    <property type="molecule type" value="Genomic_DNA"/>
</dbReference>
<dbReference type="SMR" id="Q2P9F6"/>
<dbReference type="CAZy" id="GT5">
    <property type="family name" value="Glycosyltransferase Family 5"/>
</dbReference>
<dbReference type="KEGG" id="xom:XOO0066"/>
<dbReference type="HOGENOM" id="CLU_009583_18_2_6"/>
<dbReference type="UniPathway" id="UPA00164"/>
<dbReference type="GO" id="GO:0009011">
    <property type="term" value="F:alpha-1,4-glucan glucosyltransferase (ADP-glucose donor) activity"/>
    <property type="evidence" value="ECO:0007669"/>
    <property type="project" value="UniProtKB-UniRule"/>
</dbReference>
<dbReference type="GO" id="GO:0004373">
    <property type="term" value="F:alpha-1,4-glucan glucosyltransferase (UDP-glucose donor) activity"/>
    <property type="evidence" value="ECO:0007669"/>
    <property type="project" value="InterPro"/>
</dbReference>
<dbReference type="GO" id="GO:0005978">
    <property type="term" value="P:glycogen biosynthetic process"/>
    <property type="evidence" value="ECO:0007669"/>
    <property type="project" value="UniProtKB-UniRule"/>
</dbReference>
<dbReference type="CDD" id="cd03791">
    <property type="entry name" value="GT5_Glycogen_synthase_DULL1-like"/>
    <property type="match status" value="1"/>
</dbReference>
<dbReference type="Gene3D" id="3.40.50.2000">
    <property type="entry name" value="Glycogen Phosphorylase B"/>
    <property type="match status" value="2"/>
</dbReference>
<dbReference type="HAMAP" id="MF_00484">
    <property type="entry name" value="Glycogen_synth"/>
    <property type="match status" value="1"/>
</dbReference>
<dbReference type="InterPro" id="IPR001296">
    <property type="entry name" value="Glyco_trans_1"/>
</dbReference>
<dbReference type="InterPro" id="IPR011835">
    <property type="entry name" value="GS/SS"/>
</dbReference>
<dbReference type="InterPro" id="IPR013534">
    <property type="entry name" value="Starch_synth_cat_dom"/>
</dbReference>
<dbReference type="NCBIfam" id="TIGR02095">
    <property type="entry name" value="glgA"/>
    <property type="match status" value="1"/>
</dbReference>
<dbReference type="NCBIfam" id="NF001899">
    <property type="entry name" value="PRK00654.1-2"/>
    <property type="match status" value="1"/>
</dbReference>
<dbReference type="NCBIfam" id="NF001901">
    <property type="entry name" value="PRK00654.1-5"/>
    <property type="match status" value="1"/>
</dbReference>
<dbReference type="PANTHER" id="PTHR45825:SF8">
    <property type="entry name" value="GLYCOGEN SYNTHASE"/>
    <property type="match status" value="1"/>
</dbReference>
<dbReference type="PANTHER" id="PTHR45825">
    <property type="entry name" value="GRANULE-BOUND STARCH SYNTHASE 1, CHLOROPLASTIC/AMYLOPLASTIC"/>
    <property type="match status" value="1"/>
</dbReference>
<dbReference type="Pfam" id="PF08323">
    <property type="entry name" value="Glyco_transf_5"/>
    <property type="match status" value="1"/>
</dbReference>
<dbReference type="Pfam" id="PF00534">
    <property type="entry name" value="Glycos_transf_1"/>
    <property type="match status" value="1"/>
</dbReference>
<dbReference type="SUPFAM" id="SSF53756">
    <property type="entry name" value="UDP-Glycosyltransferase/glycogen phosphorylase"/>
    <property type="match status" value="1"/>
</dbReference>
<proteinExistence type="inferred from homology"/>
<keyword id="KW-0320">Glycogen biosynthesis</keyword>
<keyword id="KW-0328">Glycosyltransferase</keyword>
<keyword id="KW-0808">Transferase</keyword>
<protein>
    <recommendedName>
        <fullName evidence="1">Glycogen synthase</fullName>
        <ecNumber evidence="1">2.4.1.21</ecNumber>
    </recommendedName>
    <alternativeName>
        <fullName evidence="1">Starch [bacterial glycogen] synthase</fullName>
    </alternativeName>
</protein>
<sequence>MLPALKKGGRPRDALGRFIRHHERLPVSLADTRGVLFVVSEMADFIKAGGLGDVAAALPRALRHRYDVRVLIPGYRAVLERAGKVEIVGRVLAHAALPACDIGRIVQSDGLPIYILLSRELFERDGSPYVSTSGSEFEDNAIRFATLSHAAADIAAGHAGLGWKPRLLHLNDWPCALAAGYVRWSGGTTPCLLTIHNLAYQGLVPYSMAGALGIPAERVAELEFYGQMSFLRGGIVNADHVNTVSVSYAKQITGPAQGCGLDRLLAGRAAKGALTGIVNGIDASWDPRTDEYLDSHFSVNQWQGRQDNAAQVRKAFGLRESTGPLFAVVSRLVHQKGLDLICEVAPQIVAAGGQIAVIGGGEPDIERQVAELTRRYPGQVGAFIGFEEGLARRMFAGADFLLMPSRFEPCGLSQMYAQRFGCLPIAHATGGLIDTVDDGVTGFLFQHASVEALRRCLERAFRTFRLPGLLAAMRRAAMLRPSGWDVAGNKYLSLYERTAAIAPALATVS</sequence>
<feature type="chain" id="PRO_0000230275" description="Glycogen synthase">
    <location>
        <begin position="1"/>
        <end position="509"/>
    </location>
</feature>
<feature type="binding site" evidence="1">
    <location>
        <position position="47"/>
    </location>
    <ligand>
        <name>ADP-alpha-D-glucose</name>
        <dbReference type="ChEBI" id="CHEBI:57498"/>
    </ligand>
</feature>
<evidence type="ECO:0000255" key="1">
    <source>
        <dbReference type="HAMAP-Rule" id="MF_00484"/>
    </source>
</evidence>
<gene>
    <name evidence="1" type="primary">glgA</name>
    <name type="ordered locus">XOO0066</name>
</gene>
<accession>Q2P9F6</accession>
<name>GLGA_XANOM</name>
<comment type="function">
    <text evidence="1">Synthesizes alpha-1,4-glucan chains using ADP-glucose.</text>
</comment>
<comment type="catalytic activity">
    <reaction evidence="1">
        <text>[(1-&gt;4)-alpha-D-glucosyl](n) + ADP-alpha-D-glucose = [(1-&gt;4)-alpha-D-glucosyl](n+1) + ADP + H(+)</text>
        <dbReference type="Rhea" id="RHEA:18189"/>
        <dbReference type="Rhea" id="RHEA-COMP:9584"/>
        <dbReference type="Rhea" id="RHEA-COMP:9587"/>
        <dbReference type="ChEBI" id="CHEBI:15378"/>
        <dbReference type="ChEBI" id="CHEBI:15444"/>
        <dbReference type="ChEBI" id="CHEBI:57498"/>
        <dbReference type="ChEBI" id="CHEBI:456216"/>
        <dbReference type="EC" id="2.4.1.21"/>
    </reaction>
</comment>
<comment type="pathway">
    <text evidence="1">Glycan biosynthesis; glycogen biosynthesis.</text>
</comment>
<comment type="similarity">
    <text evidence="1">Belongs to the glycosyltransferase 1 family. Bacterial/plant glycogen synthase subfamily.</text>
</comment>
<reference key="1">
    <citation type="journal article" date="2005" name="Jpn. Agric. Res. Q.">
        <title>Genome sequence of Xanthomonas oryzae pv. oryzae suggests contribution of large numbers of effector genes and insertion sequences to its race diversity.</title>
        <authorList>
            <person name="Ochiai H."/>
            <person name="Inoue Y."/>
            <person name="Takeya M."/>
            <person name="Sasaki A."/>
            <person name="Kaku H."/>
        </authorList>
    </citation>
    <scope>NUCLEOTIDE SEQUENCE [LARGE SCALE GENOMIC DNA]</scope>
    <source>
        <strain>MAFF 311018</strain>
    </source>
</reference>